<feature type="chain" id="PRO_1000135278" description="ATP phosphoribosyltransferase">
    <location>
        <begin position="1"/>
        <end position="211"/>
    </location>
</feature>
<protein>
    <recommendedName>
        <fullName evidence="1">ATP phosphoribosyltransferase</fullName>
        <shortName evidence="1">ATP-PRT</shortName>
        <shortName evidence="1">ATP-PRTase</shortName>
        <ecNumber evidence="1">2.4.2.17</ecNumber>
    </recommendedName>
</protein>
<name>HIS1_RIPO1</name>
<organism>
    <name type="scientific">Rippkaea orientalis (strain PCC 8801 / RF-1)</name>
    <name type="common">Cyanothece sp. (strain PCC 8801)</name>
    <dbReference type="NCBI Taxonomy" id="41431"/>
    <lineage>
        <taxon>Bacteria</taxon>
        <taxon>Bacillati</taxon>
        <taxon>Cyanobacteriota</taxon>
        <taxon>Cyanophyceae</taxon>
        <taxon>Oscillatoriophycideae</taxon>
        <taxon>Chroococcales</taxon>
        <taxon>Aphanothecaceae</taxon>
        <taxon>Rippkaea</taxon>
        <taxon>Rippkaea orientalis</taxon>
    </lineage>
</organism>
<sequence length="211" mass="23029">MLTIAIPKGALLSDAIKLFQSIGLDFSAFLDPKNRQLQITDPTNTAKALLVRATDVPVYVEYGQAQLGIVGYDLLLEKTPTVANLANLKFGYCRMSVAVPASSPYKSPVELPPNGKVASKFVNCAKKYFHTLDLPVEIIPLYGSVELGPITGMSEAIVDLVSTGRTLKENGLIEIDTLFESTAHLIAHPLSYRLNLDQINPWVTKIRDTLS</sequence>
<keyword id="KW-0028">Amino-acid biosynthesis</keyword>
<keyword id="KW-0067">ATP-binding</keyword>
<keyword id="KW-0963">Cytoplasm</keyword>
<keyword id="KW-0328">Glycosyltransferase</keyword>
<keyword id="KW-0368">Histidine biosynthesis</keyword>
<keyword id="KW-0547">Nucleotide-binding</keyword>
<keyword id="KW-1185">Reference proteome</keyword>
<keyword id="KW-0808">Transferase</keyword>
<reference key="1">
    <citation type="journal article" date="2011" name="MBio">
        <title>Novel metabolic attributes of the genus Cyanothece, comprising a group of unicellular nitrogen-fixing Cyanobacteria.</title>
        <authorList>
            <person name="Bandyopadhyay A."/>
            <person name="Elvitigala T."/>
            <person name="Welsh E."/>
            <person name="Stockel J."/>
            <person name="Liberton M."/>
            <person name="Min H."/>
            <person name="Sherman L.A."/>
            <person name="Pakrasi H.B."/>
        </authorList>
    </citation>
    <scope>NUCLEOTIDE SEQUENCE [LARGE SCALE GENOMIC DNA]</scope>
    <source>
        <strain>PCC 8801 / RF-1</strain>
    </source>
</reference>
<evidence type="ECO:0000255" key="1">
    <source>
        <dbReference type="HAMAP-Rule" id="MF_01018"/>
    </source>
</evidence>
<gene>
    <name evidence="1" type="primary">hisG</name>
    <name type="ordered locus">PCC8801_3353</name>
</gene>
<accession>B7JZB1</accession>
<comment type="function">
    <text evidence="1">Catalyzes the condensation of ATP and 5-phosphoribose 1-diphosphate to form N'-(5'-phosphoribosyl)-ATP (PR-ATP). Has a crucial role in the pathway because the rate of histidine biosynthesis seems to be controlled primarily by regulation of HisG enzymatic activity.</text>
</comment>
<comment type="catalytic activity">
    <reaction evidence="1">
        <text>1-(5-phospho-beta-D-ribosyl)-ATP + diphosphate = 5-phospho-alpha-D-ribose 1-diphosphate + ATP</text>
        <dbReference type="Rhea" id="RHEA:18473"/>
        <dbReference type="ChEBI" id="CHEBI:30616"/>
        <dbReference type="ChEBI" id="CHEBI:33019"/>
        <dbReference type="ChEBI" id="CHEBI:58017"/>
        <dbReference type="ChEBI" id="CHEBI:73183"/>
        <dbReference type="EC" id="2.4.2.17"/>
    </reaction>
</comment>
<comment type="pathway">
    <text evidence="1">Amino-acid biosynthesis; L-histidine biosynthesis; L-histidine from 5-phospho-alpha-D-ribose 1-diphosphate: step 1/9.</text>
</comment>
<comment type="subunit">
    <text evidence="1">Heteromultimer composed of HisG and HisZ subunits.</text>
</comment>
<comment type="subcellular location">
    <subcellularLocation>
        <location evidence="1">Cytoplasm</location>
    </subcellularLocation>
</comment>
<comment type="domain">
    <text>Lacks the C-terminal regulatory region which is replaced by HisZ.</text>
</comment>
<comment type="similarity">
    <text evidence="1">Belongs to the ATP phosphoribosyltransferase family. Short subfamily.</text>
</comment>
<proteinExistence type="inferred from homology"/>
<dbReference type="EC" id="2.4.2.17" evidence="1"/>
<dbReference type="EMBL" id="CP001287">
    <property type="protein sequence ID" value="ACK67322.1"/>
    <property type="molecule type" value="Genomic_DNA"/>
</dbReference>
<dbReference type="RefSeq" id="WP_012596583.1">
    <property type="nucleotide sequence ID" value="NC_011726.1"/>
</dbReference>
<dbReference type="SMR" id="B7JZB1"/>
<dbReference type="STRING" id="41431.PCC8801_3353"/>
<dbReference type="KEGG" id="cyp:PCC8801_3353"/>
<dbReference type="eggNOG" id="COG0040">
    <property type="taxonomic scope" value="Bacteria"/>
</dbReference>
<dbReference type="HOGENOM" id="CLU_038115_2_0_3"/>
<dbReference type="OrthoDB" id="9801867at2"/>
<dbReference type="UniPathway" id="UPA00031">
    <property type="reaction ID" value="UER00006"/>
</dbReference>
<dbReference type="Proteomes" id="UP000008204">
    <property type="component" value="Chromosome"/>
</dbReference>
<dbReference type="GO" id="GO:0005737">
    <property type="term" value="C:cytoplasm"/>
    <property type="evidence" value="ECO:0007669"/>
    <property type="project" value="UniProtKB-SubCell"/>
</dbReference>
<dbReference type="GO" id="GO:0005524">
    <property type="term" value="F:ATP binding"/>
    <property type="evidence" value="ECO:0007669"/>
    <property type="project" value="UniProtKB-KW"/>
</dbReference>
<dbReference type="GO" id="GO:0003879">
    <property type="term" value="F:ATP phosphoribosyltransferase activity"/>
    <property type="evidence" value="ECO:0007669"/>
    <property type="project" value="UniProtKB-UniRule"/>
</dbReference>
<dbReference type="GO" id="GO:0000105">
    <property type="term" value="P:L-histidine biosynthetic process"/>
    <property type="evidence" value="ECO:0007669"/>
    <property type="project" value="UniProtKB-UniRule"/>
</dbReference>
<dbReference type="CDD" id="cd13595">
    <property type="entry name" value="PBP2_HisGs"/>
    <property type="match status" value="1"/>
</dbReference>
<dbReference type="FunFam" id="3.40.190.10:FF:000008">
    <property type="entry name" value="ATP phosphoribosyltransferase"/>
    <property type="match status" value="1"/>
</dbReference>
<dbReference type="Gene3D" id="3.40.190.10">
    <property type="entry name" value="Periplasmic binding protein-like II"/>
    <property type="match status" value="2"/>
</dbReference>
<dbReference type="HAMAP" id="MF_01018">
    <property type="entry name" value="HisG_Short"/>
    <property type="match status" value="1"/>
</dbReference>
<dbReference type="InterPro" id="IPR013820">
    <property type="entry name" value="ATP_PRibTrfase_cat"/>
</dbReference>
<dbReference type="InterPro" id="IPR018198">
    <property type="entry name" value="ATP_PRibTrfase_CS"/>
</dbReference>
<dbReference type="InterPro" id="IPR001348">
    <property type="entry name" value="ATP_PRibTrfase_HisG"/>
</dbReference>
<dbReference type="InterPro" id="IPR024893">
    <property type="entry name" value="ATP_PRibTrfase_HisG_short"/>
</dbReference>
<dbReference type="NCBIfam" id="TIGR00070">
    <property type="entry name" value="hisG"/>
    <property type="match status" value="1"/>
</dbReference>
<dbReference type="PANTHER" id="PTHR21403:SF8">
    <property type="entry name" value="ATP PHOSPHORIBOSYLTRANSFERASE"/>
    <property type="match status" value="1"/>
</dbReference>
<dbReference type="PANTHER" id="PTHR21403">
    <property type="entry name" value="ATP PHOSPHORIBOSYLTRANSFERASE ATP-PRTASE"/>
    <property type="match status" value="1"/>
</dbReference>
<dbReference type="Pfam" id="PF01634">
    <property type="entry name" value="HisG"/>
    <property type="match status" value="1"/>
</dbReference>
<dbReference type="SUPFAM" id="SSF53850">
    <property type="entry name" value="Periplasmic binding protein-like II"/>
    <property type="match status" value="1"/>
</dbReference>
<dbReference type="PROSITE" id="PS01316">
    <property type="entry name" value="ATP_P_PHORIBOSYLTR"/>
    <property type="match status" value="1"/>
</dbReference>